<sequence length="233" mass="26314">MDNQGVIYSDLNLPPNPKRQQRKPKGNKNSILATEQEITYAELNLQKASQDFQGNDKTYHCKDLPSAPEKLIVGILGIICLILMASVVTIVVIPSTLIQRHNNSSLNTRTQKARHCGHCPEEWITYSNSCYYIGKERRTWEESLLACTSKNSSLLSIDNEEEMKFLSIISPSSWIGVFRNSSHHPWVTMNGLAFKHEIKDSDNAELNCAVLQVNRLKSAQCGSSIIYHCKHKL</sequence>
<reference key="1">
    <citation type="journal article" date="1991" name="J. Exp. Med.">
        <title>DNA sequence analysis of NKG2, a family of related cDNA clones encoding type II integral membrane proteins on human natural killer cells.</title>
        <authorList>
            <person name="Houchins J.P."/>
            <person name="Yabe T."/>
            <person name="McSherry C."/>
            <person name="Bach F.H."/>
        </authorList>
    </citation>
    <scope>NUCLEOTIDE SEQUENCE [MRNA] (ISOFORMS NKG2-A AND NKG2-B)</scope>
    <scope>VARIANT SER-29</scope>
</reference>
<reference key="2">
    <citation type="journal article" date="1996" name="Immunogenetics">
        <title>Genomic structure, chromosome location, and alternative splicing of the human NKG2A gene.</title>
        <authorList>
            <person name="Plougastel B."/>
            <person name="Jones T."/>
            <person name="Trowsdale J."/>
        </authorList>
    </citation>
    <scope>NUCLEOTIDE SEQUENCE [GENOMIC DNA] (ISOFORMS NKG2-A AND NKG2-B)</scope>
    <scope>VARIANT SER-29</scope>
</reference>
<reference key="3">
    <citation type="journal article" date="1998" name="Genomics">
        <title>Sequence analysis of a 62-kb region overlapping the human KLRC cluster of genes.</title>
        <authorList>
            <person name="Plougastel B."/>
            <person name="Trowsdale J."/>
        </authorList>
    </citation>
    <scope>NUCLEOTIDE SEQUENCE [GENOMIC DNA] (ISOFORMS NKG2-A AND NKG2-B)</scope>
    <scope>VARIANT SER-29</scope>
</reference>
<reference key="4">
    <citation type="submission" date="2001-12" db="EMBL/GenBank/DDBJ databases">
        <title>Identification and characterization of the NKG2A gene from large granular lymphocytic leukemia (LGL) cells.</title>
        <authorList>
            <person name="Kothapalli R."/>
            <person name="Kusmartseva I."/>
            <person name="Loughran T.P. Jr."/>
        </authorList>
    </citation>
    <scope>NUCLEOTIDE SEQUENCE [MRNA]</scope>
    <scope>VARIANT SER-29</scope>
</reference>
<reference key="5">
    <citation type="journal article" date="2006" name="Nature">
        <title>The finished DNA sequence of human chromosome 12.</title>
        <authorList>
            <person name="Scherer S.E."/>
            <person name="Muzny D.M."/>
            <person name="Buhay C.J."/>
            <person name="Chen R."/>
            <person name="Cree A."/>
            <person name="Ding Y."/>
            <person name="Dugan-Rocha S."/>
            <person name="Gill R."/>
            <person name="Gunaratne P."/>
            <person name="Harris R.A."/>
            <person name="Hawes A.C."/>
            <person name="Hernandez J."/>
            <person name="Hodgson A.V."/>
            <person name="Hume J."/>
            <person name="Jackson A."/>
            <person name="Khan Z.M."/>
            <person name="Kovar-Smith C."/>
            <person name="Lewis L.R."/>
            <person name="Lozado R.J."/>
            <person name="Metzker M.L."/>
            <person name="Milosavljevic A."/>
            <person name="Miner G.R."/>
            <person name="Montgomery K.T."/>
            <person name="Morgan M.B."/>
            <person name="Nazareth L.V."/>
            <person name="Scott G."/>
            <person name="Sodergren E."/>
            <person name="Song X.-Z."/>
            <person name="Steffen D."/>
            <person name="Lovering R.C."/>
            <person name="Wheeler D.A."/>
            <person name="Worley K.C."/>
            <person name="Yuan Y."/>
            <person name="Zhang Z."/>
            <person name="Adams C.Q."/>
            <person name="Ansari-Lari M.A."/>
            <person name="Ayele M."/>
            <person name="Brown M.J."/>
            <person name="Chen G."/>
            <person name="Chen Z."/>
            <person name="Clerc-Blankenburg K.P."/>
            <person name="Davis C."/>
            <person name="Delgado O."/>
            <person name="Dinh H.H."/>
            <person name="Draper H."/>
            <person name="Gonzalez-Garay M.L."/>
            <person name="Havlak P."/>
            <person name="Jackson L.R."/>
            <person name="Jacob L.S."/>
            <person name="Kelly S.H."/>
            <person name="Li L."/>
            <person name="Li Z."/>
            <person name="Liu J."/>
            <person name="Liu W."/>
            <person name="Lu J."/>
            <person name="Maheshwari M."/>
            <person name="Nguyen B.-V."/>
            <person name="Okwuonu G.O."/>
            <person name="Pasternak S."/>
            <person name="Perez L.M."/>
            <person name="Plopper F.J.H."/>
            <person name="Santibanez J."/>
            <person name="Shen H."/>
            <person name="Tabor P.E."/>
            <person name="Verduzco D."/>
            <person name="Waldron L."/>
            <person name="Wang Q."/>
            <person name="Williams G.A."/>
            <person name="Zhang J."/>
            <person name="Zhou J."/>
            <person name="Allen C.C."/>
            <person name="Amin A.G."/>
            <person name="Anyalebechi V."/>
            <person name="Bailey M."/>
            <person name="Barbaria J.A."/>
            <person name="Bimage K.E."/>
            <person name="Bryant N.P."/>
            <person name="Burch P.E."/>
            <person name="Burkett C.E."/>
            <person name="Burrell K.L."/>
            <person name="Calderon E."/>
            <person name="Cardenas V."/>
            <person name="Carter K."/>
            <person name="Casias K."/>
            <person name="Cavazos I."/>
            <person name="Cavazos S.R."/>
            <person name="Ceasar H."/>
            <person name="Chacko J."/>
            <person name="Chan S.N."/>
            <person name="Chavez D."/>
            <person name="Christopoulos C."/>
            <person name="Chu J."/>
            <person name="Cockrell R."/>
            <person name="Cox C.D."/>
            <person name="Dang M."/>
            <person name="Dathorne S.R."/>
            <person name="David R."/>
            <person name="Davis C.M."/>
            <person name="Davy-Carroll L."/>
            <person name="Deshazo D.R."/>
            <person name="Donlin J.E."/>
            <person name="D'Souza L."/>
            <person name="Eaves K.A."/>
            <person name="Egan A."/>
            <person name="Emery-Cohen A.J."/>
            <person name="Escotto M."/>
            <person name="Flagg N."/>
            <person name="Forbes L.D."/>
            <person name="Gabisi A.M."/>
            <person name="Garza M."/>
            <person name="Hamilton C."/>
            <person name="Henderson N."/>
            <person name="Hernandez O."/>
            <person name="Hines S."/>
            <person name="Hogues M.E."/>
            <person name="Huang M."/>
            <person name="Idlebird D.G."/>
            <person name="Johnson R."/>
            <person name="Jolivet A."/>
            <person name="Jones S."/>
            <person name="Kagan R."/>
            <person name="King L.M."/>
            <person name="Leal B."/>
            <person name="Lebow H."/>
            <person name="Lee S."/>
            <person name="LeVan J.M."/>
            <person name="Lewis L.C."/>
            <person name="London P."/>
            <person name="Lorensuhewa L.M."/>
            <person name="Loulseged H."/>
            <person name="Lovett D.A."/>
            <person name="Lucier A."/>
            <person name="Lucier R.L."/>
            <person name="Ma J."/>
            <person name="Madu R.C."/>
            <person name="Mapua P."/>
            <person name="Martindale A.D."/>
            <person name="Martinez E."/>
            <person name="Massey E."/>
            <person name="Mawhiney S."/>
            <person name="Meador M.G."/>
            <person name="Mendez S."/>
            <person name="Mercado C."/>
            <person name="Mercado I.C."/>
            <person name="Merritt C.E."/>
            <person name="Miner Z.L."/>
            <person name="Minja E."/>
            <person name="Mitchell T."/>
            <person name="Mohabbat F."/>
            <person name="Mohabbat K."/>
            <person name="Montgomery B."/>
            <person name="Moore N."/>
            <person name="Morris S."/>
            <person name="Munidasa M."/>
            <person name="Ngo R.N."/>
            <person name="Nguyen N.B."/>
            <person name="Nickerson E."/>
            <person name="Nwaokelemeh O.O."/>
            <person name="Nwokenkwo S."/>
            <person name="Obregon M."/>
            <person name="Oguh M."/>
            <person name="Oragunye N."/>
            <person name="Oviedo R.J."/>
            <person name="Parish B.J."/>
            <person name="Parker D.N."/>
            <person name="Parrish J."/>
            <person name="Parks K.L."/>
            <person name="Paul H.A."/>
            <person name="Payton B.A."/>
            <person name="Perez A."/>
            <person name="Perrin W."/>
            <person name="Pickens A."/>
            <person name="Primus E.L."/>
            <person name="Pu L.-L."/>
            <person name="Puazo M."/>
            <person name="Quiles M.M."/>
            <person name="Quiroz J.B."/>
            <person name="Rabata D."/>
            <person name="Reeves K."/>
            <person name="Ruiz S.J."/>
            <person name="Shao H."/>
            <person name="Sisson I."/>
            <person name="Sonaike T."/>
            <person name="Sorelle R.P."/>
            <person name="Sutton A.E."/>
            <person name="Svatek A.F."/>
            <person name="Svetz L.A."/>
            <person name="Tamerisa K.S."/>
            <person name="Taylor T.R."/>
            <person name="Teague B."/>
            <person name="Thomas N."/>
            <person name="Thorn R.D."/>
            <person name="Trejos Z.Y."/>
            <person name="Trevino B.K."/>
            <person name="Ukegbu O.N."/>
            <person name="Urban J.B."/>
            <person name="Vasquez L.I."/>
            <person name="Vera V.A."/>
            <person name="Villasana D.M."/>
            <person name="Wang L."/>
            <person name="Ward-Moore S."/>
            <person name="Warren J.T."/>
            <person name="Wei X."/>
            <person name="White F."/>
            <person name="Williamson A.L."/>
            <person name="Wleczyk R."/>
            <person name="Wooden H.S."/>
            <person name="Wooden S.H."/>
            <person name="Yen J."/>
            <person name="Yoon L."/>
            <person name="Yoon V."/>
            <person name="Zorrilla S.E."/>
            <person name="Nelson D."/>
            <person name="Kucherlapati R."/>
            <person name="Weinstock G."/>
            <person name="Gibbs R.A."/>
        </authorList>
    </citation>
    <scope>NUCLEOTIDE SEQUENCE [LARGE SCALE GENOMIC DNA]</scope>
</reference>
<reference key="6">
    <citation type="journal article" date="2004" name="Genome Res.">
        <title>The status, quality, and expansion of the NIH full-length cDNA project: the Mammalian Gene Collection (MGC).</title>
        <authorList>
            <consortium name="The MGC Project Team"/>
        </authorList>
    </citation>
    <scope>NUCLEOTIDE SEQUENCE [LARGE SCALE MRNA] (ISOFORMS NKG2-A AND NKG2-B)</scope>
    <scope>VARIANT SER-29</scope>
    <source>
        <tissue>Blood</tissue>
        <tissue>Kidney</tissue>
    </source>
</reference>
<reference key="7">
    <citation type="journal article" date="1997" name="Immunity">
        <title>Functionally and structurally distinct NK cell receptor repertoires in the peripheral blood of two human donors.</title>
        <authorList>
            <person name="Valiante N.M."/>
            <person name="Uhrberg M."/>
            <person name="Shilling H.G."/>
            <person name="Lienert-Weidenbach K."/>
            <person name="Arnett K.L."/>
            <person name="D'Andrea A."/>
            <person name="Phillips J.H."/>
            <person name="Lanier L.L."/>
            <person name="Parham P."/>
        </authorList>
    </citation>
    <scope>FUNCTION</scope>
    <scope>TISSUE SPECIFICITY</scope>
</reference>
<reference key="8">
    <citation type="journal article" date="1998" name="Eur. J. Immunol.">
        <title>Inhibition of antigen-induced T cell response and antibody-induced NK cell cytotoxicity by NKG2A: association of NKG2A with SHP-1 and SHP-2 protein-tyrosine phosphatases.</title>
        <authorList>
            <person name="Le Drean E."/>
            <person name="Vely F."/>
            <person name="Olcese L."/>
            <person name="Cambiaggi A."/>
            <person name="Guia S."/>
            <person name="Krystal G."/>
            <person name="Gervois N."/>
            <person name="Moretta A."/>
            <person name="Jotereau F."/>
            <person name="Vivier E."/>
        </authorList>
    </citation>
    <scope>FUNCTION</scope>
    <scope>INTERACTION WITH INPP5D AND INPPL1</scope>
    <scope>TISSUE SPECIFICITY</scope>
</reference>
<reference key="9">
    <citation type="journal article" date="1998" name="Nature">
        <title>HLA-E binds to natural killer cell receptors CD94/NKG2A, B and C.</title>
        <authorList>
            <person name="Braud V.M."/>
            <person name="Allan D.S."/>
            <person name="O'Callaghan C.A."/>
            <person name="Soederstroem K."/>
            <person name="D'Andrea A."/>
            <person name="Ogg G.S."/>
            <person name="Lazetic S."/>
            <person name="Young N.T."/>
            <person name="Bell J.I."/>
            <person name="Phillips J.H."/>
            <person name="Lanier L.L."/>
            <person name="McMichael A.J."/>
        </authorList>
    </citation>
    <scope>FUNCTION</scope>
</reference>
<reference key="10">
    <citation type="journal article" date="2000" name="Science">
        <title>Surface expression of HLA-E, an inhibitor of natural killer cells, enhanced by human cytomegalovirus gpUL40.</title>
        <authorList>
            <person name="Tomasec P."/>
            <person name="Braud V.M."/>
            <person name="Rickards C."/>
            <person name="Powell M.B."/>
            <person name="McSharry B.P."/>
            <person name="Gadola S."/>
            <person name="Cerundolo V."/>
            <person name="Borysiewicz L.K."/>
            <person name="McMichael A.J."/>
            <person name="Wilkinson G.W."/>
        </authorList>
    </citation>
    <scope>FUNCTION (MICROBIAL INFECTION)</scope>
</reference>
<reference key="11">
    <citation type="journal article" date="2002" name="Immunity">
        <title>TCR specificity dictates CD94/NKG2A expression by human CTL.</title>
        <authorList>
            <person name="Jabri B."/>
            <person name="Selby J.M."/>
            <person name="Negulescu H."/>
            <person name="Lee L."/>
            <person name="Roberts A.I."/>
            <person name="Beavis A."/>
            <person name="Lopez-Botet M."/>
            <person name="Ebert E.C."/>
            <person name="Winchester R.J."/>
        </authorList>
    </citation>
    <scope>FUNCTION</scope>
    <scope>TISSUE SPECIFICITY</scope>
    <scope>INDUCTION</scope>
</reference>
<reference key="12">
    <citation type="journal article" date="2002" name="J. Immunol.">
        <title>Role that each NKG2A immunoreceptor tyrosine-based inhibitory motif plays in mediating the human CD94/NKG2A inhibitory signal.</title>
        <authorList>
            <person name="Kabat J."/>
            <person name="Borrego F."/>
            <person name="Brooks A."/>
            <person name="Coligan J.E."/>
        </authorList>
    </citation>
    <scope>FUNCTION</scope>
    <scope>INTERACTION WITH INPP5D</scope>
    <scope>SUBCELLULAR LOCATION</scope>
    <scope>DOMAIN</scope>
    <scope>PHOSPHORYLATION AT TYR-8 AND TYR-40</scope>
    <scope>MUTAGENESIS OF VAL-6; TYR-8; ILE-38 AND TYR-40</scope>
</reference>
<reference key="13">
    <citation type="journal article" date="2005" name="Antivir. Ther.">
        <title>HIV-1 infection leads to increased HLA-E expression resulting in impaired function of natural killer cells.</title>
        <authorList>
            <person name="Nattermann J."/>
            <person name="Nischalke H.D."/>
            <person name="Hofmeister V."/>
            <person name="Kupfer B."/>
            <person name="Ahlenstiel G."/>
            <person name="Feldmann G."/>
            <person name="Rockstroh J."/>
            <person name="Weiss E.H."/>
            <person name="Sauerbruch T."/>
            <person name="Spengler U."/>
        </authorList>
    </citation>
    <scope>FUNCTION (MICROBIAL INFECTION)</scope>
</reference>
<reference key="14">
    <citation type="journal article" date="2008" name="J. Clin. Invest.">
        <title>Small intestinal CD8+TCRgammadelta+NKG2A+ intraepithelial lymphocytes have attributes of regulatory cells in patients with celiac disease.</title>
        <authorList>
            <person name="Bhagat G."/>
            <person name="Naiyer A.J."/>
            <person name="Shah J.G."/>
            <person name="Harper J."/>
            <person name="Jabri B."/>
            <person name="Wang T.C."/>
            <person name="Green P.H."/>
            <person name="Manavalan J.S."/>
        </authorList>
    </citation>
    <scope>FUNCTION</scope>
    <scope>TISSUE SPECIFICITY</scope>
</reference>
<reference key="15">
    <citation type="journal article" date="2011" name="J. Leukoc. Biol.">
        <title>NKG2A inhibits NKG2C effector functions of gammadelta T cells: implications in health and disease.</title>
        <authorList>
            <person name="Angelini D.F."/>
            <person name="Zambello R."/>
            <person name="Galandrini R."/>
            <person name="Diamantini A."/>
            <person name="Placido R."/>
            <person name="Micucci F."/>
            <person name="Poccia F."/>
            <person name="Semenzato G."/>
            <person name="Borsellino G."/>
            <person name="Santoni A."/>
            <person name="Battistini L."/>
        </authorList>
    </citation>
    <scope>TISSUE SPECIFICITY</scope>
    <scope>SUBCELLULAR LOCATION</scope>
</reference>
<reference key="16">
    <citation type="journal article" date="2013" name="J. Biol. Chem.">
        <title>Polymorphism in human cytomegalovirus UL40 impacts on recognition of human leukocyte antigen-E (HLA-E) by natural killer cells.</title>
        <authorList>
            <person name="Heatley S.L."/>
            <person name="Pietra G."/>
            <person name="Lin J."/>
            <person name="Widjaja J.M."/>
            <person name="Harpur C.M."/>
            <person name="Lester S."/>
            <person name="Rossjohn J."/>
            <person name="Szer J."/>
            <person name="Schwarer A."/>
            <person name="Bradstock K."/>
            <person name="Bardy P.G."/>
            <person name="Mingari M.C."/>
            <person name="Moretta L."/>
            <person name="Sullivan L.C."/>
            <person name="Brooks A.G."/>
        </authorList>
    </citation>
    <scope>FUNCTION (MICROBIAL INFECTION)</scope>
</reference>
<reference key="17">
    <citation type="journal article" date="2018" name="Cell">
        <title>Anti-NKG2A mAb Is a Checkpoint Inhibitor that Promotes Anti-tumor Immunity by Unleashing Both T and NK Cells.</title>
        <authorList>
            <person name="Andre P."/>
            <person name="Denis C."/>
            <person name="Soulas C."/>
            <person name="Bourbon-Caillet C."/>
            <person name="Lopez J."/>
            <person name="Arnoux T."/>
            <person name="Blery M."/>
            <person name="Bonnafous C."/>
            <person name="Gauthier L."/>
            <person name="Morel A."/>
            <person name="Rossi B."/>
            <person name="Remark R."/>
            <person name="Breso V."/>
            <person name="Bonnet E."/>
            <person name="Habif G."/>
            <person name="Guia S."/>
            <person name="Lalanne A.I."/>
            <person name="Hoffmann C."/>
            <person name="Lantz O."/>
            <person name="Fayette J."/>
            <person name="Boyer-Chammard A."/>
            <person name="Zerbib R."/>
            <person name="Dodion P."/>
            <person name="Ghadially H."/>
            <person name="Jure-Kunkel M."/>
            <person name="Morel Y."/>
            <person name="Herbst R."/>
            <person name="Narni-Mancinelli E."/>
            <person name="Cohen R.B."/>
            <person name="Vivier E."/>
        </authorList>
    </citation>
    <scope>FUNCTION</scope>
    <scope>TISSUE SPECIFICITY</scope>
</reference>
<reference key="18">
    <citation type="journal article" date="2019" name="J. Clin. Invest.">
        <title>Blocking expression of inhibitory receptor NKG2A overcomes tumor resistance to NK cells.</title>
        <authorList>
            <person name="Kamiya T."/>
            <person name="Seow S.V."/>
            <person name="Wong D."/>
            <person name="Robinson M."/>
            <person name="Campana D."/>
        </authorList>
    </citation>
    <scope>FUNCTION</scope>
</reference>
<reference key="19">
    <citation type="journal article" date="2020" name="Cell. Mol. Immunol.">
        <title>Functional exhaustion of antiviral lymphocytes in COVID-19 patients.</title>
        <authorList>
            <person name="Zheng M."/>
            <person name="Gao Y."/>
            <person name="Wang G."/>
            <person name="Song G."/>
            <person name="Liu S."/>
            <person name="Sun D."/>
            <person name="Xu Y."/>
            <person name="Tian Z."/>
        </authorList>
    </citation>
    <scope>FUNCTION (MICROBIAL INFECTION)</scope>
</reference>
<reference key="20">
    <citation type="journal article" date="2020" name="Cells">
        <title>SARS-CoV-2 Spike 1 Protein Controls Natural Killer Cell Activation via the HLA-E/NKG2A Pathway.</title>
        <authorList>
            <person name="Bortolotti D."/>
            <person name="Gentili V."/>
            <person name="Rizzo S."/>
            <person name="Rotola A."/>
            <person name="Rizzo R."/>
        </authorList>
    </citation>
    <scope>FUNCTION (MICROBIAL INFECTION)</scope>
</reference>
<reference key="21">
    <citation type="journal article" date="2023" name="Nat. Immunol.">
        <title>HLA class I signal peptide polymorphism determines the level of CD94/NKG2-HLA-E-mediated regulation of effector cell responses.</title>
        <authorList>
            <person name="Lin Z."/>
            <person name="Bashirova A.A."/>
            <person name="Viard M."/>
            <person name="Garner L."/>
            <person name="Quastel M."/>
            <person name="Beiersdorfer M."/>
            <person name="Kasprzak W.K."/>
            <person name="Akdag M."/>
            <person name="Yuki Y."/>
            <person name="Ojeda P."/>
            <person name="Das S."/>
            <person name="Andresson T."/>
            <person name="Naranbhai V."/>
            <person name="Horowitz A."/>
            <person name="McMichael A.J."/>
            <person name="Hoelzemer A."/>
            <person name="Gillespie G.M."/>
            <person name="Garcia-Beltran W.F."/>
            <person name="Carrington M."/>
        </authorList>
    </citation>
    <scope>FUNCTION</scope>
</reference>
<reference key="22">
    <citation type="journal article" date="2007" name="Immunity">
        <title>The heterodimeric assembly of the CD94-NKG2 receptor family and implications for human leukocyte antigen-E recognition.</title>
        <authorList>
            <person name="Sullivan L.C."/>
            <person name="Clements C.S."/>
            <person name="Beddoe T."/>
            <person name="Johnson D."/>
            <person name="Hoare H.L."/>
            <person name="Lin J."/>
            <person name="Huyton T."/>
            <person name="Hopkins E.J."/>
            <person name="Reid H.H."/>
            <person name="Wilce M.C."/>
            <person name="Kabat J."/>
            <person name="Borrego F."/>
            <person name="Coligan J.E."/>
            <person name="Rossjohn J."/>
            <person name="Brooks A.G."/>
        </authorList>
    </citation>
    <scope>X-RAY CRYSTALLOGRAPHY (2.5 ANGSTROMS) OF 113-232 IN COMPLEX WITH KLRD1</scope>
    <scope>SUBUNIT</scope>
    <scope>DISULFIDE BONDS</scope>
    <scope>MUTAGENESIS OF ARG-137; MET-163; 167-SER--SER-170; SER-172; ASP-200; ASP-202; GLN-212; VAL-213; ARG-215; LYS-217; GLN-220 AND SER-223</scope>
    <scope>FUNCTION</scope>
</reference>
<reference key="23">
    <citation type="journal article" date="2008" name="J. Exp. Med.">
        <title>CD94-NKG2A recognition of human leukocyte antigen (HLA)-E bound to an HLA class I leader sequence.</title>
        <authorList>
            <person name="Petrie E.J."/>
            <person name="Clements C.S."/>
            <person name="Lin J."/>
            <person name="Sullivan L.C."/>
            <person name="Johnson D."/>
            <person name="Huyton T."/>
            <person name="Heroux A."/>
            <person name="Hoare H.L."/>
            <person name="Beddoe T."/>
            <person name="Reid H.H."/>
            <person name="Wilce M.C."/>
            <person name="Brooks A.G."/>
            <person name="Rossjohn J."/>
        </authorList>
    </citation>
    <scope>X-RAY CRYSTALLOGRAPHY (3.4 ANGSTROMS) OF 113-232 IN COMPLEX WITH KLRD1</scope>
    <scope>SUBUNIT</scope>
    <scope>DISULFIDE BONDS</scope>
</reference>
<reference key="24">
    <citation type="journal article" date="2008" name="Proc. Natl. Acad. Sci. U.S.A.">
        <title>Structural basis for NKG2A/CD94 recognition of HLA-E.</title>
        <authorList>
            <person name="Kaiser B.K."/>
            <person name="Pizarro J.C."/>
            <person name="Kerns J."/>
            <person name="Strong R.K."/>
        </authorList>
    </citation>
    <scope>X-RAY CRYSTALLOGRAPHY (4.41 ANGSTROMS) OF 113-232 IN COMPLEX WITH KLRD1</scope>
    <scope>SUBUNIT</scope>
    <scope>DISULFIDE BONDS</scope>
</reference>
<organism>
    <name type="scientific">Homo sapiens</name>
    <name type="common">Human</name>
    <dbReference type="NCBI Taxonomy" id="9606"/>
    <lineage>
        <taxon>Eukaryota</taxon>
        <taxon>Metazoa</taxon>
        <taxon>Chordata</taxon>
        <taxon>Craniata</taxon>
        <taxon>Vertebrata</taxon>
        <taxon>Euteleostomi</taxon>
        <taxon>Mammalia</taxon>
        <taxon>Eutheria</taxon>
        <taxon>Euarchontoglires</taxon>
        <taxon>Primates</taxon>
        <taxon>Haplorrhini</taxon>
        <taxon>Catarrhini</taxon>
        <taxon>Hominidae</taxon>
        <taxon>Homo</taxon>
    </lineage>
</organism>
<evidence type="ECO:0000255" key="1"/>
<evidence type="ECO:0000255" key="2">
    <source>
        <dbReference type="PROSITE-ProRule" id="PRU00040"/>
    </source>
</evidence>
<evidence type="ECO:0000256" key="3">
    <source>
        <dbReference type="SAM" id="MobiDB-lite"/>
    </source>
</evidence>
<evidence type="ECO:0000269" key="4">
    <source>
    </source>
</evidence>
<evidence type="ECO:0000269" key="5">
    <source>
    </source>
</evidence>
<evidence type="ECO:0000269" key="6">
    <source>
    </source>
</evidence>
<evidence type="ECO:0000269" key="7">
    <source>
    </source>
</evidence>
<evidence type="ECO:0000269" key="8">
    <source>
    </source>
</evidence>
<evidence type="ECO:0000269" key="9">
    <source>
    </source>
</evidence>
<evidence type="ECO:0000269" key="10">
    <source>
    </source>
</evidence>
<evidence type="ECO:0000269" key="11">
    <source>
    </source>
</evidence>
<evidence type="ECO:0000269" key="12">
    <source>
    </source>
</evidence>
<evidence type="ECO:0000269" key="13">
    <source>
    </source>
</evidence>
<evidence type="ECO:0000269" key="14">
    <source>
    </source>
</evidence>
<evidence type="ECO:0000269" key="15">
    <source>
    </source>
</evidence>
<evidence type="ECO:0000269" key="16">
    <source>
    </source>
</evidence>
<evidence type="ECO:0000269" key="17">
    <source>
    </source>
</evidence>
<evidence type="ECO:0000269" key="18">
    <source>
    </source>
</evidence>
<evidence type="ECO:0000269" key="19">
    <source>
    </source>
</evidence>
<evidence type="ECO:0000269" key="20">
    <source>
    </source>
</evidence>
<evidence type="ECO:0000269" key="21">
    <source>
    </source>
</evidence>
<evidence type="ECO:0000269" key="22">
    <source>
    </source>
</evidence>
<evidence type="ECO:0000269" key="23">
    <source>
    </source>
</evidence>
<evidence type="ECO:0000269" key="24">
    <source>
    </source>
</evidence>
<evidence type="ECO:0000269" key="25">
    <source>
    </source>
</evidence>
<evidence type="ECO:0000269" key="26">
    <source ref="4"/>
</evidence>
<evidence type="ECO:0000303" key="27">
    <source>
    </source>
</evidence>
<evidence type="ECO:0000303" key="28">
    <source>
    </source>
</evidence>
<evidence type="ECO:0000303" key="29">
    <source>
    </source>
</evidence>
<evidence type="ECO:0007829" key="30">
    <source>
        <dbReference type="PDB" id="3BDW"/>
    </source>
</evidence>
<evidence type="ECO:0007829" key="31">
    <source>
        <dbReference type="PDB" id="3CDG"/>
    </source>
</evidence>
<dbReference type="EMBL" id="X54867">
    <property type="protein sequence ID" value="CAA38649.1"/>
    <property type="molecule type" value="mRNA"/>
</dbReference>
<dbReference type="EMBL" id="X54868">
    <property type="protein sequence ID" value="CAA38650.1"/>
    <property type="molecule type" value="mRNA"/>
</dbReference>
<dbReference type="EMBL" id="U54786">
    <property type="protein sequence ID" value="AAB17133.1"/>
    <property type="molecule type" value="Genomic_DNA"/>
</dbReference>
<dbReference type="EMBL" id="U54783">
    <property type="protein sequence ID" value="AAB17133.1"/>
    <property type="status" value="JOINED"/>
    <property type="molecule type" value="Genomic_DNA"/>
</dbReference>
<dbReference type="EMBL" id="U54784">
    <property type="protein sequence ID" value="AAB17133.1"/>
    <property type="status" value="JOINED"/>
    <property type="molecule type" value="Genomic_DNA"/>
</dbReference>
<dbReference type="EMBL" id="U54785">
    <property type="protein sequence ID" value="AAB17133.1"/>
    <property type="status" value="JOINED"/>
    <property type="molecule type" value="Genomic_DNA"/>
</dbReference>
<dbReference type="EMBL" id="AF023840">
    <property type="protein sequence ID" value="AAC17488.1"/>
    <property type="molecule type" value="Genomic_DNA"/>
</dbReference>
<dbReference type="EMBL" id="AF461812">
    <property type="protein sequence ID" value="AAL65234.1"/>
    <property type="molecule type" value="mRNA"/>
</dbReference>
<dbReference type="EMBL" id="AC068775">
    <property type="status" value="NOT_ANNOTATED_CDS"/>
    <property type="molecule type" value="Genomic_DNA"/>
</dbReference>
<dbReference type="EMBL" id="BC012550">
    <property type="protein sequence ID" value="AAH12550.1"/>
    <property type="molecule type" value="mRNA"/>
</dbReference>
<dbReference type="EMBL" id="BC053840">
    <property type="protein sequence ID" value="AAH53840.1"/>
    <property type="molecule type" value="mRNA"/>
</dbReference>
<dbReference type="CCDS" id="CCDS8625.1">
    <molecule id="P26715-1"/>
</dbReference>
<dbReference type="CCDS" id="CCDS8626.1">
    <molecule id="P26715-2"/>
</dbReference>
<dbReference type="PIR" id="PT0372">
    <property type="entry name" value="PT0372"/>
</dbReference>
<dbReference type="RefSeq" id="NP_002250.2">
    <molecule id="P26715-1"/>
    <property type="nucleotide sequence ID" value="NM_002259.5"/>
</dbReference>
<dbReference type="RefSeq" id="NP_015567.2">
    <molecule id="P26715-2"/>
    <property type="nucleotide sequence ID" value="NM_007328.4"/>
</dbReference>
<dbReference type="RefSeq" id="NP_998822.2">
    <molecule id="P26715-2"/>
    <property type="nucleotide sequence ID" value="NM_213657.3"/>
</dbReference>
<dbReference type="RefSeq" id="NP_998823.2">
    <molecule id="P26715-1"/>
    <property type="nucleotide sequence ID" value="NM_213658.3"/>
</dbReference>
<dbReference type="PDB" id="2RMX">
    <property type="method" value="NMR"/>
    <property type="chains" value="B=1-15"/>
</dbReference>
<dbReference type="PDB" id="2YU7">
    <property type="method" value="NMR"/>
    <property type="chains" value="B=33-47"/>
</dbReference>
<dbReference type="PDB" id="3BDW">
    <property type="method" value="X-ray"/>
    <property type="resolution" value="2.50 A"/>
    <property type="chains" value="B/D=113-232"/>
</dbReference>
<dbReference type="PDB" id="3CDG">
    <property type="method" value="X-ray"/>
    <property type="resolution" value="3.40 A"/>
    <property type="chains" value="F/K=113-232"/>
</dbReference>
<dbReference type="PDB" id="3CII">
    <property type="method" value="X-ray"/>
    <property type="resolution" value="4.41 A"/>
    <property type="chains" value="H/J=113-232"/>
</dbReference>
<dbReference type="PDBsum" id="2RMX"/>
<dbReference type="PDBsum" id="2YU7"/>
<dbReference type="PDBsum" id="3BDW"/>
<dbReference type="PDBsum" id="3CDG"/>
<dbReference type="PDBsum" id="3CII"/>
<dbReference type="SMR" id="P26715"/>
<dbReference type="BioGRID" id="110020">
    <property type="interactions" value="163"/>
</dbReference>
<dbReference type="ComplexPortal" id="CPX-2502">
    <property type="entry name" value="CD94-NKG2A natural killer receptor complex"/>
</dbReference>
<dbReference type="CORUM" id="P26715"/>
<dbReference type="ELM" id="P26715"/>
<dbReference type="FunCoup" id="P26715">
    <property type="interactions" value="232"/>
</dbReference>
<dbReference type="IntAct" id="P26715">
    <property type="interactions" value="164"/>
</dbReference>
<dbReference type="STRING" id="9606.ENSP00000438038"/>
<dbReference type="ChEMBL" id="CHEMBL4630892"/>
<dbReference type="GuidetoPHARMACOLOGY" id="2849"/>
<dbReference type="UniLectin" id="P26715"/>
<dbReference type="GlyCosmos" id="P26715">
    <property type="glycosylation" value="4 sites, No reported glycans"/>
</dbReference>
<dbReference type="GlyGen" id="P26715">
    <property type="glycosylation" value="5 sites, 1 O-linked glycan (1 site)"/>
</dbReference>
<dbReference type="iPTMnet" id="P26715"/>
<dbReference type="PhosphoSitePlus" id="P26715"/>
<dbReference type="BioMuta" id="KLRC1"/>
<dbReference type="DMDM" id="317373399"/>
<dbReference type="jPOST" id="P26715"/>
<dbReference type="MassIVE" id="P26715"/>
<dbReference type="PaxDb" id="9606-ENSP00000438038"/>
<dbReference type="PeptideAtlas" id="P26715"/>
<dbReference type="ProteomicsDB" id="54362">
    <molecule id="P26715-1"/>
</dbReference>
<dbReference type="ProteomicsDB" id="54363">
    <molecule id="P26715-2"/>
</dbReference>
<dbReference type="ABCD" id="P26715">
    <property type="antibodies" value="1 sequenced antibody"/>
</dbReference>
<dbReference type="Antibodypedia" id="23336">
    <property type="antibodies" value="624 antibodies from 37 providers"/>
</dbReference>
<dbReference type="DNASU" id="3821"/>
<dbReference type="Ensembl" id="ENST00000347831.9">
    <molecule id="P26715-2"/>
    <property type="protein sequence ID" value="ENSP00000256965.7"/>
    <property type="gene ID" value="ENSG00000134545.14"/>
</dbReference>
<dbReference type="Ensembl" id="ENST00000359151.8">
    <molecule id="P26715-1"/>
    <property type="protein sequence ID" value="ENSP00000352064.3"/>
    <property type="gene ID" value="ENSG00000134545.14"/>
</dbReference>
<dbReference type="Ensembl" id="ENST00000408006.7">
    <molecule id="P26715-2"/>
    <property type="protein sequence ID" value="ENSP00000385304.3"/>
    <property type="gene ID" value="ENSG00000134545.14"/>
</dbReference>
<dbReference type="Ensembl" id="ENST00000544822.2">
    <molecule id="P26715-1"/>
    <property type="protein sequence ID" value="ENSP00000438038.1"/>
    <property type="gene ID" value="ENSG00000134545.14"/>
</dbReference>
<dbReference type="GeneID" id="3821"/>
<dbReference type="KEGG" id="hsa:3821"/>
<dbReference type="MANE-Select" id="ENST00000359151.8">
    <property type="protein sequence ID" value="ENSP00000352064.3"/>
    <property type="RefSeq nucleotide sequence ID" value="NM_002259.5"/>
    <property type="RefSeq protein sequence ID" value="NP_002250.2"/>
</dbReference>
<dbReference type="UCSC" id="uc001qyl.5">
    <molecule id="P26715-1"/>
    <property type="organism name" value="human"/>
</dbReference>
<dbReference type="AGR" id="HGNC:6374"/>
<dbReference type="CTD" id="3821"/>
<dbReference type="DisGeNET" id="3821"/>
<dbReference type="GeneCards" id="KLRC1"/>
<dbReference type="HGNC" id="HGNC:6374">
    <property type="gene designation" value="KLRC1"/>
</dbReference>
<dbReference type="HPA" id="ENSG00000134545">
    <property type="expression patterns" value="Tissue enhanced (lymphoid)"/>
</dbReference>
<dbReference type="MIM" id="161555">
    <property type="type" value="gene"/>
</dbReference>
<dbReference type="neXtProt" id="NX_P26715"/>
<dbReference type="OpenTargets" id="ENSG00000134545"/>
<dbReference type="PharmGKB" id="PA30163"/>
<dbReference type="VEuPathDB" id="HostDB:ENSG00000134545"/>
<dbReference type="eggNOG" id="ENOG502S6IE">
    <property type="taxonomic scope" value="Eukaryota"/>
</dbReference>
<dbReference type="GeneTree" id="ENSGT00940000164619"/>
<dbReference type="HOGENOM" id="CLU_049894_9_2_1"/>
<dbReference type="InParanoid" id="P26715"/>
<dbReference type="OMA" id="ITSWIPV"/>
<dbReference type="OrthoDB" id="10059571at2759"/>
<dbReference type="PAN-GO" id="P26715">
    <property type="GO annotations" value="5 GO annotations based on evolutionary models"/>
</dbReference>
<dbReference type="PhylomeDB" id="P26715"/>
<dbReference type="TreeFam" id="TF336674"/>
<dbReference type="PathwayCommons" id="P26715"/>
<dbReference type="Reactome" id="R-HSA-198933">
    <property type="pathway name" value="Immunoregulatory interactions between a Lymphoid and a non-Lymphoid cell"/>
</dbReference>
<dbReference type="SignaLink" id="P26715"/>
<dbReference type="SIGNOR" id="P26715"/>
<dbReference type="BioGRID-ORCS" id="3821">
    <property type="hits" value="6 hits in 1117 CRISPR screens"/>
</dbReference>
<dbReference type="EvolutionaryTrace" id="P26715"/>
<dbReference type="GenomeRNAi" id="3821"/>
<dbReference type="Pharos" id="P26715">
    <property type="development level" value="Tbio"/>
</dbReference>
<dbReference type="PRO" id="PR:P26715"/>
<dbReference type="Proteomes" id="UP000005640">
    <property type="component" value="Chromosome 12"/>
</dbReference>
<dbReference type="RNAct" id="P26715">
    <property type="molecule type" value="protein"/>
</dbReference>
<dbReference type="Bgee" id="ENSG00000134545">
    <property type="expression patterns" value="Expressed in granulocyte and 93 other cell types or tissues"/>
</dbReference>
<dbReference type="ExpressionAtlas" id="P26715">
    <property type="expression patterns" value="baseline and differential"/>
</dbReference>
<dbReference type="GO" id="GO:0009897">
    <property type="term" value="C:external side of plasma membrane"/>
    <property type="evidence" value="ECO:0000318"/>
    <property type="project" value="GO_Central"/>
</dbReference>
<dbReference type="GO" id="GO:0005886">
    <property type="term" value="C:plasma membrane"/>
    <property type="evidence" value="ECO:0000314"/>
    <property type="project" value="UniProtKB"/>
</dbReference>
<dbReference type="GO" id="GO:0043235">
    <property type="term" value="C:receptor complex"/>
    <property type="evidence" value="ECO:0000314"/>
    <property type="project" value="UniProtKB"/>
</dbReference>
<dbReference type="GO" id="GO:0030246">
    <property type="term" value="F:carbohydrate binding"/>
    <property type="evidence" value="ECO:0007669"/>
    <property type="project" value="UniProtKB-KW"/>
</dbReference>
<dbReference type="GO" id="GO:0062082">
    <property type="term" value="F:HLA-E specific inhibitory MHC class Ib receptor activity"/>
    <property type="evidence" value="ECO:0000314"/>
    <property type="project" value="UniProtKB"/>
</dbReference>
<dbReference type="GO" id="GO:0062080">
    <property type="term" value="F:inhibitory MHC class Ib receptor activity"/>
    <property type="evidence" value="ECO:0000314"/>
    <property type="project" value="UniProtKB"/>
</dbReference>
<dbReference type="GO" id="GO:0023024">
    <property type="term" value="F:MHC class I protein complex binding"/>
    <property type="evidence" value="ECO:0000353"/>
    <property type="project" value="UniProtKB"/>
</dbReference>
<dbReference type="GO" id="GO:0004888">
    <property type="term" value="F:transmembrane signaling receptor activity"/>
    <property type="evidence" value="ECO:0000318"/>
    <property type="project" value="GO_Central"/>
</dbReference>
<dbReference type="GO" id="GO:0002250">
    <property type="term" value="P:adaptive immune response"/>
    <property type="evidence" value="ECO:0007669"/>
    <property type="project" value="UniProtKB-KW"/>
</dbReference>
<dbReference type="GO" id="GO:0002305">
    <property type="term" value="P:CD8-positive, gamma-delta intraepithelial T cell differentiation"/>
    <property type="evidence" value="ECO:0000314"/>
    <property type="project" value="UniProtKB"/>
</dbReference>
<dbReference type="GO" id="GO:0007166">
    <property type="term" value="P:cell surface receptor signaling pathway"/>
    <property type="evidence" value="ECO:0000304"/>
    <property type="project" value="ProtInc"/>
</dbReference>
<dbReference type="GO" id="GO:0045087">
    <property type="term" value="P:innate immune response"/>
    <property type="evidence" value="ECO:0007669"/>
    <property type="project" value="UniProtKB-KW"/>
</dbReference>
<dbReference type="GO" id="GO:0002769">
    <property type="term" value="P:natural killer cell inhibitory signaling pathway"/>
    <property type="evidence" value="ECO:0000314"/>
    <property type="project" value="UniProtKB"/>
</dbReference>
<dbReference type="GO" id="GO:0045953">
    <property type="term" value="P:negative regulation of natural killer cell mediated cytotoxicity"/>
    <property type="evidence" value="ECO:0000314"/>
    <property type="project" value="UniProtKB"/>
</dbReference>
<dbReference type="GO" id="GO:0001915">
    <property type="term" value="P:negative regulation of T cell mediated cytotoxicity"/>
    <property type="evidence" value="ECO:0000314"/>
    <property type="project" value="UniProtKB"/>
</dbReference>
<dbReference type="GO" id="GO:0045954">
    <property type="term" value="P:positive regulation of natural killer cell mediated cytotoxicity"/>
    <property type="evidence" value="ECO:0000318"/>
    <property type="project" value="GO_Central"/>
</dbReference>
<dbReference type="GO" id="GO:0032814">
    <property type="term" value="P:regulation of natural killer cell activation"/>
    <property type="evidence" value="ECO:0000303"/>
    <property type="project" value="ComplexPortal"/>
</dbReference>
<dbReference type="GO" id="GO:0002223">
    <property type="term" value="P:stimulatory C-type lectin receptor signaling pathway"/>
    <property type="evidence" value="ECO:0000318"/>
    <property type="project" value="GO_Central"/>
</dbReference>
<dbReference type="CDD" id="cd03593">
    <property type="entry name" value="CLECT_NK_receptors_like"/>
    <property type="match status" value="1"/>
</dbReference>
<dbReference type="FunFam" id="3.10.100.10:FF:000071">
    <property type="entry name" value="NKG2-A/NKG2-B type II integral membrane protein"/>
    <property type="match status" value="1"/>
</dbReference>
<dbReference type="Gene3D" id="3.10.100.10">
    <property type="entry name" value="Mannose-Binding Protein A, subunit A"/>
    <property type="match status" value="1"/>
</dbReference>
<dbReference type="InterPro" id="IPR001304">
    <property type="entry name" value="C-type_lectin-like"/>
</dbReference>
<dbReference type="InterPro" id="IPR016186">
    <property type="entry name" value="C-type_lectin-like/link_sf"/>
</dbReference>
<dbReference type="InterPro" id="IPR016187">
    <property type="entry name" value="CTDL_fold"/>
</dbReference>
<dbReference type="InterPro" id="IPR050919">
    <property type="entry name" value="NKG2/CD94_NK_receptors"/>
</dbReference>
<dbReference type="InterPro" id="IPR033992">
    <property type="entry name" value="NKR-like_CTLD"/>
</dbReference>
<dbReference type="PANTHER" id="PTHR22800">
    <property type="entry name" value="C-TYPE LECTIN PROTEINS"/>
    <property type="match status" value="1"/>
</dbReference>
<dbReference type="PANTHER" id="PTHR22800:SF242">
    <property type="entry name" value="NKG2-A_NKG2-B TYPE II INTEGRAL MEMBRANE PROTEIN"/>
    <property type="match status" value="1"/>
</dbReference>
<dbReference type="Pfam" id="PF00059">
    <property type="entry name" value="Lectin_C"/>
    <property type="match status" value="1"/>
</dbReference>
<dbReference type="SMART" id="SM00034">
    <property type="entry name" value="CLECT"/>
    <property type="match status" value="1"/>
</dbReference>
<dbReference type="SUPFAM" id="SSF56436">
    <property type="entry name" value="C-type lectin-like"/>
    <property type="match status" value="1"/>
</dbReference>
<dbReference type="PROSITE" id="PS50041">
    <property type="entry name" value="C_TYPE_LECTIN_2"/>
    <property type="match status" value="1"/>
</dbReference>
<gene>
    <name type="primary">KLRC1</name>
    <name evidence="28" type="synonym">NKG2A</name>
</gene>
<accession>P26715</accession>
<name>NKG2A_HUMAN</name>
<comment type="function">
    <text evidence="5 6 9 10 16 17 20 22 23 24">Immune inhibitory receptor involved in self-nonself discrimination. In complex with KLRD1 on cytotoxic and regulatory lymphocyte subsets, recognizes non-classical major histocompatibility (MHC) class Ib molecule HLA-E loaded with self-peptides derived from the signal sequence of classical MHC class Ia molecules. Enables cytotoxic cells to monitor the expression of MHC class I molecules in healthy cells and to tolerate self (PubMed:18083576, PubMed:37264229, PubMed:9430220, PubMed:9486650). Upon HLA-E-peptide binding, transmits intracellular signals through two immunoreceptor tyrosine-based inhibition motifs (ITIMs) by recruiting INPP5D/SHP-1 and INPPL1/SHP-2 tyrosine phosphatases to ITIMs, and ultimately opposing signals transmitted by activating receptors through dephosphorylation of proximal signaling molecules (PubMed:12165520, PubMed:9485206). Key inhibitory receptor on natural killer (NK) cells that regulates their activation and effector functions (PubMed:30860984, PubMed:9430220, PubMed:9485206, PubMed:9486650). Dominantly counteracts T cell receptor signaling on a subset of memory/effector CD8-positive T cells as part of an antigen-driven response to avoid autoimmunity (PubMed:12387742). On intraepithelial CD8-positive gamma-delta regulatory T cells triggers TGFB1 secretion, which in turn limits the cytotoxic programming of intraepithelial CD8-positive alpha-beta T cells, distinguishing harmless from pathogenic antigens (PubMed:18064301). In HLA-E-rich tumor microenvironment, acts as an immune inhibitory checkpoint and may contribute to progressive loss of effector functions of NK cells and tumor-specific T cells, a state known as cell exhaustion (PubMed:30503213, PubMed:30860984).</text>
</comment>
<comment type="function">
    <text evidence="4 15">(Microbial infection) Viruses like human cytomegalovirus have evolved an escape mechanism whereby virus-induced down-regulation of host MHC class I molecules is coupled to the binding of viral peptides to HLA-E, restoring HLA-E expression and inducing HLA-E-dependent NK cell immune tolerance to infected cells. Recognizes HLA-E in complex with human cytomegalovirus UL40-derived peptide (VMAPRTLIL) and inhibits NK cell cytotoxicity.</text>
</comment>
<comment type="function">
    <text evidence="8">(Microbial infection) May recognize HLA-E in complex with HIV-1 gag/Capsid protein p24-derived peptide (AISPRTLNA) on infected cells and may inhibit NK cell cytotoxicity, a mechanism that allows HIV-1 to escape immune recognition.</text>
</comment>
<comment type="function">
    <text evidence="18 19">(Microbial infection) Upon SARS-CoV-2 infection, may contribute to functional exhaustion of cytotoxic NK cells and CD8-positive T cells (PubMed:32203188, PubMed:32859121). On NK cells, may recognize HLA-E in complex with SARS-CoV-2 S/Spike protein S1-derived peptide (LQPRTFLL) expressed on the surface of lung epithelial cells, inducing NK cell exhaustion and dampening antiviral immune surveillance (PubMed:32859121).</text>
</comment>
<comment type="subunit">
    <text evidence="5 10 11 12 23">Heterodimer with KLRD1; disulfide-linked (PubMed:18083576, PubMed:18332182, PubMed:18448674). KLRD1-KLRC1 heterodimer interacts with peptide-bound HLA-E-B2M heterotrimeric complex (PubMed:18083576). Competes with KLRC2 for its interaction with HLA-E (PubMed:18083576). Interacts (via ITIM) with INPP5D/SHIP-1 and INPPL1/SHIP-2 (via SH2 domain).</text>
</comment>
<comment type="interaction">
    <interactant intactId="EBI-9018187">
        <id>P26715</id>
    </interactant>
    <interactant intactId="EBI-3904417">
        <id>Q99437</id>
        <label>ATP6V0B</label>
    </interactant>
    <organismsDiffer>false</organismsDiffer>
    <experiments>3</experiments>
</comment>
<comment type="interaction">
    <interactant intactId="EBI-9018187">
        <id>P26715</id>
    </interactant>
    <interactant intactId="EBI-721179">
        <id>P27449</id>
        <label>ATP6V0C</label>
    </interactant>
    <organismsDiffer>false</organismsDiffer>
    <experiments>3</experiments>
</comment>
<comment type="interaction">
    <interactant intactId="EBI-9018187">
        <id>P26715</id>
    </interactant>
    <interactant intactId="EBI-3922513">
        <id>O95393</id>
        <label>BMP10</label>
    </interactant>
    <organismsDiffer>false</organismsDiffer>
    <experiments>3</experiments>
</comment>
<comment type="interaction">
    <interactant intactId="EBI-9018187">
        <id>P26715</id>
    </interactant>
    <interactant intactId="EBI-12244618">
        <id>Q6PL45-2</id>
        <label>BRICD5</label>
    </interactant>
    <organismsDiffer>false</organismsDiffer>
    <experiments>3</experiments>
</comment>
<comment type="interaction">
    <interactant intactId="EBI-9018187">
        <id>P26715</id>
    </interactant>
    <interactant intactId="EBI-1049597">
        <id>P27797</id>
        <label>CALR</label>
    </interactant>
    <organismsDiffer>false</organismsDiffer>
    <experiments>3</experiments>
</comment>
<comment type="interaction">
    <interactant intactId="EBI-9018187">
        <id>P26715</id>
    </interactant>
    <interactant intactId="EBI-10210332">
        <id>P48509</id>
        <label>CD151</label>
    </interactant>
    <organismsDiffer>false</organismsDiffer>
    <experiments>3</experiments>
</comment>
<comment type="interaction">
    <interactant intactId="EBI-9018187">
        <id>P26715</id>
    </interactant>
    <interactant intactId="EBI-682379">
        <id>P27701</id>
        <label>CD82</label>
    </interactant>
    <organismsDiffer>false</organismsDiffer>
    <experiments>3</experiments>
</comment>
<comment type="interaction">
    <interactant intactId="EBI-9018187">
        <id>P26715</id>
    </interactant>
    <interactant intactId="EBI-746189">
        <id>Q15078</id>
        <label>CDK5R1</label>
    </interactant>
    <organismsDiffer>false</organismsDiffer>
    <experiments>3</experiments>
</comment>
<comment type="interaction">
    <interactant intactId="EBI-9018187">
        <id>P26715</id>
    </interactant>
    <interactant intactId="EBI-2130213">
        <id>Q99675</id>
        <label>CGRRF1</label>
    </interactant>
    <organismsDiffer>false</organismsDiffer>
    <experiments>3</experiments>
</comment>
<comment type="interaction">
    <interactant intactId="EBI-9018187">
        <id>P26715</id>
    </interactant>
    <interactant intactId="EBI-12820543">
        <id>O75508</id>
        <label>CLDN11</label>
    </interactant>
    <organismsDiffer>false</organismsDiffer>
    <experiments>3</experiments>
</comment>
<comment type="interaction">
    <interactant intactId="EBI-9018187">
        <id>P26715</id>
    </interactant>
    <interactant intactId="EBI-11749983">
        <id>Q9UHP7-3</id>
        <label>CLEC2D</label>
    </interactant>
    <organismsDiffer>false</organismsDiffer>
    <experiments>4</experiments>
</comment>
<comment type="interaction">
    <interactant intactId="EBI-9018187">
        <id>P26715</id>
    </interactant>
    <interactant intactId="EBI-11989440">
        <id>Q9BXN2-6</id>
        <label>CLEC7A</label>
    </interactant>
    <organismsDiffer>false</organismsDiffer>
    <experiments>3</experiments>
</comment>
<comment type="interaction">
    <interactant intactId="EBI-9018187">
        <id>P26715</id>
    </interactant>
    <interactant intactId="EBI-12813623">
        <id>A0PK11</id>
        <label>CLRN2</label>
    </interactant>
    <organismsDiffer>false</organismsDiffer>
    <experiments>3</experiments>
</comment>
<comment type="interaction">
    <interactant intactId="EBI-9018187">
        <id>P26715</id>
    </interactant>
    <interactant intactId="EBI-12019274">
        <id>Q4LDR2</id>
        <label>CTXN3</label>
    </interactant>
    <organismsDiffer>false</organismsDiffer>
    <experiments>3</experiments>
</comment>
<comment type="interaction">
    <interactant intactId="EBI-9018187">
        <id>P26715</id>
    </interactant>
    <interactant intactId="EBI-10269179">
        <id>Q8NBI2</id>
        <label>CYB561A3</label>
    </interactant>
    <organismsDiffer>false</organismsDiffer>
    <experiments>3</experiments>
</comment>
<comment type="interaction">
    <interactant intactId="EBI-9018187">
        <id>P26715</id>
    </interactant>
    <interactant intactId="EBI-351007">
        <id>P36957</id>
        <label>DLST</label>
    </interactant>
    <organismsDiffer>false</organismsDiffer>
    <experiments>3</experiments>
</comment>
<comment type="interaction">
    <interactant intactId="EBI-9018187">
        <id>P26715</id>
    </interactant>
    <interactant intactId="EBI-4319440">
        <id>P54849</id>
        <label>EMP1</label>
    </interactant>
    <organismsDiffer>false</organismsDiffer>
    <experiments>3</experiments>
</comment>
<comment type="interaction">
    <interactant intactId="EBI-9018187">
        <id>P26715</id>
    </interactant>
    <interactant intactId="EBI-3907816">
        <id>P54852</id>
        <label>EMP3</label>
    </interactant>
    <organismsDiffer>false</organismsDiffer>
    <experiments>4</experiments>
</comment>
<comment type="interaction">
    <interactant intactId="EBI-9018187">
        <id>P26715</id>
    </interactant>
    <interactant intactId="EBI-10976398">
        <id>Q7Z2K6</id>
        <label>ERMP1</label>
    </interactant>
    <organismsDiffer>false</organismsDiffer>
    <experiments>3</experiments>
</comment>
<comment type="interaction">
    <interactant intactId="EBI-9018187">
        <id>P26715</id>
    </interactant>
    <interactant intactId="EBI-3905204">
        <id>P29033</id>
        <label>GJB2</label>
    </interactant>
    <organismsDiffer>false</organismsDiffer>
    <experiments>3</experiments>
</comment>
<comment type="interaction">
    <interactant intactId="EBI-9018187">
        <id>P26715</id>
    </interactant>
    <interactant intactId="EBI-12831526">
        <id>Q9NTQ9</id>
        <label>GJB4</label>
    </interactant>
    <organismsDiffer>false</organismsDiffer>
    <experiments>3</experiments>
</comment>
<comment type="interaction">
    <interactant intactId="EBI-9018187">
        <id>P26715</id>
    </interactant>
    <interactant intactId="EBI-13345609">
        <id>O95452</id>
        <label>GJB6</label>
    </interactant>
    <organismsDiffer>false</organismsDiffer>
    <experiments>3</experiments>
</comment>
<comment type="interaction">
    <interactant intactId="EBI-9018187">
        <id>P26715</id>
    </interactant>
    <interactant intactId="EBI-12808020">
        <id>Q9BZJ8</id>
        <label>GPR61</label>
    </interactant>
    <organismsDiffer>false</organismsDiffer>
    <experiments>3</experiments>
</comment>
<comment type="interaction">
    <interactant intactId="EBI-9018187">
        <id>P26715</id>
    </interactant>
    <interactant intactId="EBI-2866431">
        <id>Q9Y287</id>
        <label>ITM2B</label>
    </interactant>
    <organismsDiffer>false</organismsDiffer>
    <experiments>3</experiments>
</comment>
<comment type="interaction">
    <interactant intactId="EBI-9018187">
        <id>P26715</id>
    </interactant>
    <interactant intactId="EBI-9018174">
        <id>Q13241</id>
        <label>KLRD1</label>
    </interactant>
    <organismsDiffer>false</organismsDiffer>
    <experiments>6</experiments>
</comment>
<comment type="interaction">
    <interactant intactId="EBI-9018187">
        <id>P26715</id>
    </interactant>
    <interactant intactId="EBI-750770">
        <id>Q96E93</id>
        <label>KLRG1</label>
    </interactant>
    <organismsDiffer>false</organismsDiffer>
    <experiments>3</experiments>
</comment>
<comment type="interaction">
    <interactant intactId="EBI-9018187">
        <id>P26715</id>
    </interactant>
    <interactant intactId="EBI-10264855">
        <id>Q8N112</id>
        <label>LSMEM2</label>
    </interactant>
    <organismsDiffer>false</organismsDiffer>
    <experiments>3</experiments>
</comment>
<comment type="interaction">
    <interactant intactId="EBI-9018187">
        <id>P26715</id>
    </interactant>
    <interactant intactId="EBI-3932027">
        <id>P21145</id>
        <label>MAL</label>
    </interactant>
    <organismsDiffer>false</organismsDiffer>
    <experiments>6</experiments>
</comment>
<comment type="interaction">
    <interactant intactId="EBI-9018187">
        <id>P26715</id>
    </interactant>
    <interactant intactId="EBI-750078">
        <id>Q13021</id>
        <label>MALL</label>
    </interactant>
    <organismsDiffer>false</organismsDiffer>
    <experiments>3</experiments>
</comment>
<comment type="interaction">
    <interactant intactId="EBI-9018187">
        <id>P26715</id>
    </interactant>
    <interactant intactId="EBI-12070086">
        <id>Q5J8X5</id>
        <label>MS4A13</label>
    </interactant>
    <organismsDiffer>false</organismsDiffer>
    <experiments>3</experiments>
</comment>
<comment type="interaction">
    <interactant intactId="EBI-9018187">
        <id>P26715</id>
    </interactant>
    <interactant intactId="EBI-1055945">
        <id>Q8TDX7</id>
        <label>NEK7</label>
    </interactant>
    <organismsDiffer>false</organismsDiffer>
    <experiments>3</experiments>
</comment>
<comment type="interaction">
    <interactant intactId="EBI-9018187">
        <id>P26715</id>
    </interactant>
    <interactant intactId="EBI-3919611">
        <id>Q16617</id>
        <label>NKG7</label>
    </interactant>
    <organismsDiffer>false</organismsDiffer>
    <experiments>3</experiments>
</comment>
<comment type="interaction">
    <interactant intactId="EBI-9018187">
        <id>P26715</id>
    </interactant>
    <interactant intactId="EBI-12188331">
        <id>P60201-2</id>
        <label>PLP1</label>
    </interactant>
    <organismsDiffer>false</organismsDiffer>
    <experiments>3</experiments>
</comment>
<comment type="interaction">
    <interactant intactId="EBI-9018187">
        <id>P26715</id>
    </interactant>
    <interactant intactId="EBI-2845982">
        <id>Q01453</id>
        <label>PMP22</label>
    </interactant>
    <organismsDiffer>false</organismsDiffer>
    <experiments>6</experiments>
</comment>
<comment type="interaction">
    <interactant intactId="EBI-9018187">
        <id>P26715</id>
    </interactant>
    <interactant intactId="EBI-10197617">
        <id>P11686</id>
        <label>SFTPC</label>
    </interactant>
    <organismsDiffer>false</organismsDiffer>
    <experiments>3</experiments>
</comment>
<comment type="interaction">
    <interactant intactId="EBI-9018187">
        <id>P26715</id>
    </interactant>
    <interactant intactId="EBI-10255122">
        <id>Q6ZP80</id>
        <label>TMEM182</label>
    </interactant>
    <organismsDiffer>false</organismsDiffer>
    <experiments>3</experiments>
</comment>
<comment type="interaction">
    <interactant intactId="EBI-9018187">
        <id>P26715</id>
    </interactant>
    <interactant intactId="EBI-17180389">
        <id>E9PQX1</id>
        <label>TMEM262</label>
    </interactant>
    <organismsDiffer>false</organismsDiffer>
    <experiments>3</experiments>
</comment>
<comment type="interaction">
    <interactant intactId="EBI-9018187">
        <id>P26715</id>
    </interactant>
    <interactant intactId="EBI-3922833">
        <id>Q969K7</id>
        <label>TMEM54</label>
    </interactant>
    <organismsDiffer>false</organismsDiffer>
    <experiments>3</experiments>
</comment>
<comment type="interaction">
    <interactant intactId="EBI-9018187">
        <id>P26715</id>
    </interactant>
    <interactant intactId="EBI-11724433">
        <id>Q6ZT21</id>
        <label>TMPPE</label>
    </interactant>
    <organismsDiffer>false</organismsDiffer>
    <experiments>3</experiments>
</comment>
<comment type="interaction">
    <interactant intactId="EBI-9018187">
        <id>P26715</id>
    </interactant>
    <interactant intactId="EBI-12195249">
        <id>Q5TGU0</id>
        <label>TSPO2</label>
    </interactant>
    <organismsDiffer>false</organismsDiffer>
    <experiments>3</experiments>
</comment>
<comment type="interaction">
    <interactant intactId="EBI-9018187">
        <id>P26715</id>
    </interactant>
    <interactant intactId="EBI-10243654">
        <id>Q5BVD1</id>
        <label>TTMP</label>
    </interactant>
    <organismsDiffer>false</organismsDiffer>
    <experiments>3</experiments>
</comment>
<comment type="interaction">
    <interactant intactId="EBI-9018187">
        <id>P26715</id>
    </interactant>
    <interactant intactId="EBI-4401271">
        <id>Q9H1C4</id>
        <label>UNC93B1</label>
    </interactant>
    <organismsDiffer>false</organismsDiffer>
    <experiments>3</experiments>
</comment>
<comment type="interaction">
    <interactant intactId="EBI-9018187">
        <id>P26715</id>
    </interactant>
    <interactant intactId="EBI-12237619">
        <id>O75841</id>
        <label>UPK1B</label>
    </interactant>
    <organismsDiffer>false</organismsDiffer>
    <experiments>3</experiments>
</comment>
<comment type="interaction">
    <interactant intactId="EBI-9018187">
        <id>P26715</id>
    </interactant>
    <interactant intactId="EBI-10191195">
        <id>O95183</id>
        <label>VAMP5</label>
    </interactant>
    <organismsDiffer>false</organismsDiffer>
    <experiments>3</experiments>
</comment>
<comment type="interaction">
    <interactant intactId="EBI-9018187">
        <id>P26715</id>
    </interactant>
    <interactant intactId="EBI-723716">
        <id>Q9UEU0</id>
        <label>VTI1B</label>
    </interactant>
    <organismsDiffer>false</organismsDiffer>
    <experiments>3</experiments>
</comment>
<comment type="interaction">
    <interactant intactId="EBI-9018187">
        <id>P26715</id>
    </interactant>
    <interactant intactId="EBI-718439">
        <id>O95159</id>
        <label>ZFPL1</label>
    </interactant>
    <organismsDiffer>false</organismsDiffer>
    <experiments>3</experiments>
</comment>
<comment type="subcellular location">
    <subcellularLocation>
        <location evidence="5 14">Cell membrane</location>
        <topology evidence="1">Single-pass type II membrane protein</topology>
    </subcellularLocation>
</comment>
<comment type="alternative products">
    <event type="alternative splicing"/>
    <isoform>
        <id>P26715-1</id>
        <name>NKG2-A</name>
        <sequence type="displayed"/>
    </isoform>
    <isoform>
        <id>P26715-2</id>
        <name>NKG2-B</name>
        <sequence type="described" ref="VSP_003062"/>
    </isoform>
</comment>
<comment type="tissue specificity">
    <text evidence="6 9 14 16 22 23">Predominantly expressed in NK cells (at protein level) (PubMed:20952657, PubMed:9430220, PubMed:9485206). Expressed in intraepithelial CD8-positive T cell subsets with higher frequency in gamma-delta T cells than alpha-beta T cells (at protein level) (PubMed:18064301). Expressed in memory gamma-delta T cells (at protein level) (PubMed:20952657). Restricted to a subset of memory/effector CD8-positive alpha-beta T cells (at protein level) (PubMed:12387742). Expressed in intratumoral NK and CD8-positive T cells (PubMed:30503213). Expressed in melanoma-specific cytotoxic T cell clones (at protein level) (PubMed:9485206). KLRD1-KLRC1 and KLRD1-KLRC2 are differentially expressed in NK and T cell populations, with only minor subsets expressing both receptor complexes (at protein level) (PubMed:20952657).</text>
</comment>
<comment type="induction">
    <text evidence="6">Up-regulated in memory CD8-positive alpha-beta T cell clones upon antigen-specific stimulation.</text>
</comment>
<comment type="domain">
    <text evidence="5">The cytosolic N-terminus contains two immunoreceptor tyrosine-based inhibitory motifs (ITIMs), which are essential for the association with INPP5D/SHIP-1 and INPPL1/SHIP-2 phosphatases and functional inhibition.</text>
</comment>
<comment type="PTM">
    <text evidence="5">Phosphorylated.</text>
</comment>
<comment type="online information" name="Functional Glycomics Gateway - Glycan Binding">
    <link uri="http://www.functionalglycomics.org/glycomics/GBPServlet?&amp;operationType=view&amp;cbpId=cbp_hum_Ctlect_245"/>
    <text>NKG-2A</text>
</comment>
<protein>
    <recommendedName>
        <fullName>NKG2-A/NKG2-B type II integral membrane protein</fullName>
    </recommendedName>
    <alternativeName>
        <fullName>CD159 antigen-like family member A</fullName>
    </alternativeName>
    <alternativeName>
        <fullName>NK cell receptor A</fullName>
    </alternativeName>
    <alternativeName>
        <fullName>NKG2-A/B-activating NK receptor</fullName>
    </alternativeName>
    <cdAntigenName>CD159a</cdAntigenName>
</protein>
<proteinExistence type="evidence at protein level"/>
<feature type="chain" id="PRO_0000046659" description="NKG2-A/NKG2-B type II integral membrane protein">
    <location>
        <begin position="1"/>
        <end position="233"/>
    </location>
</feature>
<feature type="topological domain" description="Cytoplasmic" evidence="1">
    <location>
        <begin position="1"/>
        <end position="70"/>
    </location>
</feature>
<feature type="transmembrane region" description="Helical; Signal-anchor for type II membrane protein" evidence="1">
    <location>
        <begin position="71"/>
        <end position="93"/>
    </location>
</feature>
<feature type="topological domain" description="Extracellular" evidence="1">
    <location>
        <begin position="94"/>
        <end position="233"/>
    </location>
</feature>
<feature type="domain" description="C-type lectin" evidence="2">
    <location>
        <begin position="118"/>
        <end position="231"/>
    </location>
</feature>
<feature type="region of interest" description="Disordered" evidence="3">
    <location>
        <begin position="1"/>
        <end position="29"/>
    </location>
</feature>
<feature type="short sequence motif" description="Immunoreceptor tyrosine-based inhibition motif (ITIM)" evidence="5">
    <location>
        <begin position="6"/>
        <end position="11"/>
    </location>
</feature>
<feature type="short sequence motif" description="Immunoreceptor tyrosine-based inhibition motif (ITIM)" evidence="5">
    <location>
        <begin position="38"/>
        <end position="43"/>
    </location>
</feature>
<feature type="modified residue" description="Phosphotyrosine" evidence="5">
    <location>
        <position position="8"/>
    </location>
</feature>
<feature type="modified residue" description="Phosphotyrosine" evidence="5">
    <location>
        <position position="40"/>
    </location>
</feature>
<feature type="glycosylation site" description="N-linked (GlcNAc...) asparagine" evidence="1">
    <location>
        <position position="102"/>
    </location>
</feature>
<feature type="glycosylation site" description="N-linked (GlcNAc...) asparagine" evidence="1">
    <location>
        <position position="103"/>
    </location>
</feature>
<feature type="glycosylation site" description="N-linked (GlcNAc...) asparagine" evidence="1">
    <location>
        <position position="151"/>
    </location>
</feature>
<feature type="glycosylation site" description="N-linked (GlcNAc...) asparagine" evidence="1">
    <location>
        <position position="180"/>
    </location>
</feature>
<feature type="disulfide bond" description="Interchain (with C-59 in KLRD1)" evidence="10">
    <location>
        <position position="116"/>
    </location>
</feature>
<feature type="disulfide bond" evidence="10">
    <location>
        <begin position="119"/>
        <end position="130"/>
    </location>
</feature>
<feature type="disulfide bond" evidence="10">
    <location>
        <begin position="147"/>
        <end position="229"/>
    </location>
</feature>
<feature type="disulfide bond" evidence="10">
    <location>
        <begin position="208"/>
        <end position="221"/>
    </location>
</feature>
<feature type="splice variant" id="VSP_003062" description="In isoform NKG2-B." evidence="27 29">
    <location>
        <begin position="96"/>
        <end position="113"/>
    </location>
</feature>
<feature type="sequence variant" id="VAR_050120" description="In dbSNP:rs2253849." evidence="7 13 21 25 26">
    <original>N</original>
    <variation>S</variation>
    <location>
        <position position="29"/>
    </location>
</feature>
<feature type="mutagenesis site" description="Decreases interaction with INPP5D/SHIP-1; when associated A-38." evidence="5">
    <original>V</original>
    <variation>A</variation>
    <location>
        <position position="6"/>
    </location>
</feature>
<feature type="mutagenesis site" description="Impairs phosphorylation, interaction with INPP5D/SHIP-1 and NK cell functional inhibition; when associated F-40." evidence="5">
    <original>Y</original>
    <variation>F</variation>
    <location>
        <position position="8"/>
    </location>
</feature>
<feature type="mutagenesis site" description="Decreases interaction with INPP5D/SHIP-1; when associated A-6." evidence="5">
    <original>I</original>
    <variation>A</variation>
    <location>
        <position position="38"/>
    </location>
</feature>
<feature type="mutagenesis site" description="Impairs phosphorylation, interaction with INPP5D/SHIP-1 and NK cell functional inhibition; when associated F-8." evidence="5">
    <original>Y</original>
    <variation>F</variation>
    <location>
        <position position="40"/>
    </location>
</feature>
<feature type="mutagenesis site" description="Reduces binding to HLA-E." evidence="10">
    <original>R</original>
    <variation>A</variation>
    <location>
        <position position="137"/>
    </location>
</feature>
<feature type="mutagenesis site" description="Has no impact on the affinity for HLA-E." evidence="10">
    <original>M</original>
    <variation>I</variation>
    <location>
        <position position="163"/>
    </location>
</feature>
<feature type="mutagenesis site" description="Impairs binding to HLA-E." evidence="10">
    <original>SIIS</original>
    <variation>ASIL</variation>
    <location>
        <begin position="167"/>
        <end position="170"/>
    </location>
</feature>
<feature type="mutagenesis site" description="Has no impact on the affinity for HLA-E." evidence="10">
    <original>S</original>
    <variation>A</variation>
    <location>
        <position position="172"/>
    </location>
</feature>
<feature type="mutagenesis site" description="Has no impact on the affinity for HLA-E." evidence="10">
    <original>D</original>
    <variation>A</variation>
    <location>
        <position position="200"/>
    </location>
</feature>
<feature type="mutagenesis site" description="Has no impact on the affinity for HLA-E." evidence="10">
    <original>D</original>
    <variation>A</variation>
    <location>
        <position position="202"/>
    </location>
</feature>
<feature type="mutagenesis site" description="Reduces binding to HLA-E." evidence="10">
    <original>Q</original>
    <variation>A</variation>
    <location>
        <position position="212"/>
    </location>
</feature>
<feature type="mutagenesis site" description="Has no impact on the affinity for HLA-E." evidence="10">
    <original>V</original>
    <variation>A</variation>
    <location>
        <position position="213"/>
    </location>
</feature>
<feature type="mutagenesis site" description="Reduces binding to HLA-E." evidence="10">
    <original>R</original>
    <variation>A</variation>
    <location>
        <position position="215"/>
    </location>
</feature>
<feature type="mutagenesis site" description="Reduces binding to HLA-E." evidence="10">
    <original>K</original>
    <variation>A</variation>
    <location>
        <position position="217"/>
    </location>
</feature>
<feature type="mutagenesis site" description="Has little impact on affinity for HLA-E." evidence="10">
    <original>Q</original>
    <variation>A</variation>
    <location>
        <position position="220"/>
    </location>
</feature>
<feature type="mutagenesis site" description="Has no impact on affinity for HLA-E." evidence="10">
    <original>S</original>
    <variation>A</variation>
    <location>
        <position position="223"/>
    </location>
</feature>
<feature type="strand" evidence="31">
    <location>
        <begin position="117"/>
        <end position="119"/>
    </location>
</feature>
<feature type="strand" evidence="30">
    <location>
        <begin position="124"/>
        <end position="138"/>
    </location>
</feature>
<feature type="helix" evidence="30">
    <location>
        <begin position="140"/>
        <end position="149"/>
    </location>
</feature>
<feature type="strand" evidence="30">
    <location>
        <begin position="152"/>
        <end position="154"/>
    </location>
</feature>
<feature type="helix" evidence="30">
    <location>
        <begin position="160"/>
        <end position="169"/>
    </location>
</feature>
<feature type="strand" evidence="30">
    <location>
        <begin position="171"/>
        <end position="178"/>
    </location>
</feature>
<feature type="strand" evidence="30">
    <location>
        <begin position="191"/>
        <end position="193"/>
    </location>
</feature>
<feature type="strand" evidence="30">
    <location>
        <begin position="208"/>
        <end position="219"/>
    </location>
</feature>
<feature type="strand" evidence="30">
    <location>
        <begin position="225"/>
        <end position="230"/>
    </location>
</feature>
<keyword id="KW-0002">3D-structure</keyword>
<keyword id="KW-1064">Adaptive immunity</keyword>
<keyword id="KW-0025">Alternative splicing</keyword>
<keyword id="KW-1003">Cell membrane</keyword>
<keyword id="KW-1015">Disulfide bond</keyword>
<keyword id="KW-0325">Glycoprotein</keyword>
<keyword id="KW-0945">Host-virus interaction</keyword>
<keyword id="KW-0391">Immunity</keyword>
<keyword id="KW-0399">Innate immunity</keyword>
<keyword id="KW-0430">Lectin</keyword>
<keyword id="KW-0472">Membrane</keyword>
<keyword id="KW-0597">Phosphoprotein</keyword>
<keyword id="KW-1267">Proteomics identification</keyword>
<keyword id="KW-0675">Receptor</keyword>
<keyword id="KW-1185">Reference proteome</keyword>
<keyword id="KW-0735">Signal-anchor</keyword>
<keyword id="KW-0812">Transmembrane</keyword>
<keyword id="KW-1133">Transmembrane helix</keyword>